<proteinExistence type="inferred from homology"/>
<dbReference type="EMBL" id="HE600940">
    <property type="protein sequence ID" value="CAP31498.3"/>
    <property type="molecule type" value="Genomic_DNA"/>
</dbReference>
<dbReference type="SMR" id="A8XFZ3"/>
<dbReference type="FunCoup" id="A8XFZ3">
    <property type="interactions" value="743"/>
</dbReference>
<dbReference type="STRING" id="6238.A8XFZ3"/>
<dbReference type="EnsemblMetazoa" id="CBG12528a.1">
    <property type="protein sequence ID" value="CBG12528a.1"/>
    <property type="gene ID" value="WBGene00033468"/>
</dbReference>
<dbReference type="WormBase" id="CBG12528a">
    <property type="protein sequence ID" value="CBP37566"/>
    <property type="gene ID" value="WBGene00033468"/>
    <property type="gene designation" value="Cbr-axl-1"/>
</dbReference>
<dbReference type="eggNOG" id="ENOG502TG1M">
    <property type="taxonomic scope" value="Eukaryota"/>
</dbReference>
<dbReference type="HOGENOM" id="CLU_058688_0_0_1"/>
<dbReference type="InParanoid" id="A8XFZ3"/>
<dbReference type="OMA" id="HMAMSTQ"/>
<dbReference type="Proteomes" id="UP000008549">
    <property type="component" value="Unassembled WGS sequence"/>
</dbReference>
<dbReference type="GO" id="GO:0019901">
    <property type="term" value="F:protein kinase binding"/>
    <property type="evidence" value="ECO:0000250"/>
    <property type="project" value="UniProtKB"/>
</dbReference>
<dbReference type="GO" id="GO:0007411">
    <property type="term" value="P:axon guidance"/>
    <property type="evidence" value="ECO:0000250"/>
    <property type="project" value="UniProtKB"/>
</dbReference>
<dbReference type="GO" id="GO:0048468">
    <property type="term" value="P:cell development"/>
    <property type="evidence" value="ECO:0000250"/>
    <property type="project" value="UniProtKB"/>
</dbReference>
<dbReference type="GO" id="GO:0030178">
    <property type="term" value="P:negative regulation of Wnt signaling pathway"/>
    <property type="evidence" value="ECO:0000250"/>
    <property type="project" value="UniProtKB"/>
</dbReference>
<dbReference type="GO" id="GO:0016055">
    <property type="term" value="P:Wnt signaling pathway"/>
    <property type="evidence" value="ECO:0007669"/>
    <property type="project" value="UniProtKB-KW"/>
</dbReference>
<dbReference type="FunFam" id="2.40.240.130:FF:000007">
    <property type="entry name" value="Axin-like protein 1"/>
    <property type="match status" value="1"/>
</dbReference>
<dbReference type="Gene3D" id="2.40.240.130">
    <property type="match status" value="1"/>
</dbReference>
<dbReference type="InterPro" id="IPR001158">
    <property type="entry name" value="DIX"/>
</dbReference>
<dbReference type="InterPro" id="IPR038207">
    <property type="entry name" value="DIX_dom_sf"/>
</dbReference>
<dbReference type="InterPro" id="IPR016137">
    <property type="entry name" value="RGS"/>
</dbReference>
<dbReference type="InterPro" id="IPR036305">
    <property type="entry name" value="RGS_sf"/>
</dbReference>
<dbReference type="InterPro" id="IPR029071">
    <property type="entry name" value="Ubiquitin-like_domsf"/>
</dbReference>
<dbReference type="Pfam" id="PF00778">
    <property type="entry name" value="DIX"/>
    <property type="match status" value="1"/>
</dbReference>
<dbReference type="SUPFAM" id="SSF48097">
    <property type="entry name" value="Regulator of G-protein signaling, RGS"/>
    <property type="match status" value="1"/>
</dbReference>
<dbReference type="SUPFAM" id="SSF54236">
    <property type="entry name" value="Ubiquitin-like"/>
    <property type="match status" value="1"/>
</dbReference>
<dbReference type="PROSITE" id="PS50841">
    <property type="entry name" value="DIX"/>
    <property type="match status" value="1"/>
</dbReference>
<dbReference type="PROSITE" id="PS50132">
    <property type="entry name" value="RGS"/>
    <property type="match status" value="1"/>
</dbReference>
<comment type="function">
    <text evidence="1">Works in parallel with pry-1 in negatively regulating bar-1 signaling in vulval precursor cells and Q neuroblasts. Shown to have a role in excretory cell development (By similarity).</text>
</comment>
<comment type="subunit">
    <text evidence="1">Interacts with bar-1, dsh-2, gsk-3, and mig-5.</text>
</comment>
<keyword id="KW-0217">Developmental protein</keyword>
<keyword id="KW-1185">Reference proteome</keyword>
<keyword id="KW-0879">Wnt signaling pathway</keyword>
<protein>
    <recommendedName>
        <fullName evidence="1">Axin-like protein 1</fullName>
    </recommendedName>
</protein>
<organism>
    <name type="scientific">Caenorhabditis briggsae</name>
    <dbReference type="NCBI Taxonomy" id="6238"/>
    <lineage>
        <taxon>Eukaryota</taxon>
        <taxon>Metazoa</taxon>
        <taxon>Ecdysozoa</taxon>
        <taxon>Nematoda</taxon>
        <taxon>Chromadorea</taxon>
        <taxon>Rhabditida</taxon>
        <taxon>Rhabditina</taxon>
        <taxon>Rhabditomorpha</taxon>
        <taxon>Rhabditoidea</taxon>
        <taxon>Rhabditidae</taxon>
        <taxon>Peloderinae</taxon>
        <taxon>Caenorhabditis</taxon>
    </lineage>
</organism>
<name>AXLP1_CAEBR</name>
<reference key="1">
    <citation type="journal article" date="2003" name="PLoS Biol.">
        <title>The genome sequence of Caenorhabditis briggsae: a platform for comparative genomics.</title>
        <authorList>
            <person name="Stein L.D."/>
            <person name="Bao Z."/>
            <person name="Blasiar D."/>
            <person name="Blumenthal T."/>
            <person name="Brent M.R."/>
            <person name="Chen N."/>
            <person name="Chinwalla A."/>
            <person name="Clarke L."/>
            <person name="Clee C."/>
            <person name="Coghlan A."/>
            <person name="Coulson A."/>
            <person name="D'Eustachio P."/>
            <person name="Fitch D.H.A."/>
            <person name="Fulton L.A."/>
            <person name="Fulton R.E."/>
            <person name="Griffiths-Jones S."/>
            <person name="Harris T.W."/>
            <person name="Hillier L.W."/>
            <person name="Kamath R."/>
            <person name="Kuwabara P.E."/>
            <person name="Mardis E.R."/>
            <person name="Marra M.A."/>
            <person name="Miner T.L."/>
            <person name="Minx P."/>
            <person name="Mullikin J.C."/>
            <person name="Plumb R.W."/>
            <person name="Rogers J."/>
            <person name="Schein J.E."/>
            <person name="Sohrmann M."/>
            <person name="Spieth J."/>
            <person name="Stajich J.E."/>
            <person name="Wei C."/>
            <person name="Willey D."/>
            <person name="Wilson R.K."/>
            <person name="Durbin R.M."/>
            <person name="Waterston R.H."/>
        </authorList>
    </citation>
    <scope>NUCLEOTIDE SEQUENCE [LARGE SCALE GENOMIC DNA]</scope>
    <source>
        <strain>AF16</strain>
    </source>
</reference>
<evidence type="ECO:0000250" key="1">
    <source>
        <dbReference type="UniProtKB" id="Q3LRZ3"/>
    </source>
</evidence>
<evidence type="ECO:0000255" key="2">
    <source>
        <dbReference type="PROSITE-ProRule" id="PRU00069"/>
    </source>
</evidence>
<evidence type="ECO:0000255" key="3">
    <source>
        <dbReference type="PROSITE-ProRule" id="PRU00171"/>
    </source>
</evidence>
<evidence type="ECO:0000256" key="4">
    <source>
        <dbReference type="SAM" id="MobiDB-lite"/>
    </source>
</evidence>
<feature type="chain" id="PRO_0000347251" description="Axin-like protein 1">
    <location>
        <begin position="1"/>
        <end position="395"/>
    </location>
</feature>
<feature type="domain" description="RGS" evidence="3">
    <location>
        <begin position="4"/>
        <end position="132"/>
    </location>
</feature>
<feature type="domain" description="DIX" evidence="2">
    <location>
        <begin position="301"/>
        <end position="386"/>
    </location>
</feature>
<feature type="region of interest" description="Disordered" evidence="4">
    <location>
        <begin position="190"/>
        <end position="230"/>
    </location>
</feature>
<feature type="compositionally biased region" description="Basic and acidic residues" evidence="4">
    <location>
        <begin position="194"/>
        <end position="208"/>
    </location>
</feature>
<accession>A8XFZ3</accession>
<gene>
    <name type="primary">axl-1</name>
    <name type="ORF">CBG12528</name>
</gene>
<sequence length="395" mass="45583">MTMRSKTFSDRILNDSEFFKWCQKEESRNADSITLYKSILEFESKFKSGSPSLSLLKLARHIHRKYVSLNTGTCNVIEDSTRTEMSKRVHEVLDGKSPYIELFDPLKQPLFQHLRSMHTEYSTTTADVSNTWEDTSSTDSSDKGATIWFNDDAIDRSSRHEISQNTVTHESEDDRFAFFNAVCTRLNSLQETKNSSETEEEKKKERSADPYGSDGFAPPPQSTQTHTLRNLPKRFESLYKKKRQQNTTTTDSSGFGSNASDFWSFERYGKSNHGTLERPNRLFPGSNNGFSTLQPKKRSGEIQKLTVELRYENDVPMVAKISANQSVTLRYFRHLFGLHYSDNCRFFFKSTCEDGSAHYQWTLLFQDDDILPVFQNRITAICRMCPPPPEDHHLI</sequence>